<keyword id="KW-0963">Cytoplasm</keyword>
<keyword id="KW-0903">Direct protein sequencing</keyword>
<keyword id="KW-0324">Glycolysis</keyword>
<keyword id="KW-0520">NAD</keyword>
<keyword id="KW-0521">NADP</keyword>
<keyword id="KW-0547">Nucleotide-binding</keyword>
<keyword id="KW-0560">Oxidoreductase</keyword>
<keyword id="KW-1185">Reference proteome</keyword>
<accession>P80505</accession>
<name>G3P2_SYNY3</name>
<comment type="function">
    <text evidence="3">Involved in photosynthetic carbon assimilation. Catalyzes the NAD(P)-dependent oxidative phosphorylation of glyceraldehyde 3-phosphate (G3P) to 1,3-bisphosphoglycerate (BPG). The first reaction step involves the formation of a hemiacetal intermediate between G3P and a cysteine residue, and this hemiacetal intermediate is then oxidized to a thioester, with concomitant reduction of NAD to NADH. The reduced NADH is then exchanged with the second NAD, and the thioester is attacked by a nucleophilic inorganic phosphate to produce BPG. It can use both NADP and NAD.</text>
</comment>
<comment type="catalytic activity">
    <reaction evidence="3">
        <text>D-glyceraldehyde 3-phosphate + phosphate + NADP(+) = (2R)-3-phospho-glyceroyl phosphate + NADPH + H(+)</text>
        <dbReference type="Rhea" id="RHEA:10296"/>
        <dbReference type="ChEBI" id="CHEBI:15378"/>
        <dbReference type="ChEBI" id="CHEBI:43474"/>
        <dbReference type="ChEBI" id="CHEBI:57604"/>
        <dbReference type="ChEBI" id="CHEBI:57783"/>
        <dbReference type="ChEBI" id="CHEBI:58349"/>
        <dbReference type="ChEBI" id="CHEBI:59776"/>
        <dbReference type="EC" id="1.2.1.59"/>
    </reaction>
</comment>
<comment type="catalytic activity">
    <reaction evidence="3">
        <text>D-glyceraldehyde 3-phosphate + phosphate + NAD(+) = (2R)-3-phospho-glyceroyl phosphate + NADH + H(+)</text>
        <dbReference type="Rhea" id="RHEA:10300"/>
        <dbReference type="ChEBI" id="CHEBI:15378"/>
        <dbReference type="ChEBI" id="CHEBI:43474"/>
        <dbReference type="ChEBI" id="CHEBI:57540"/>
        <dbReference type="ChEBI" id="CHEBI:57604"/>
        <dbReference type="ChEBI" id="CHEBI:57945"/>
        <dbReference type="ChEBI" id="CHEBI:59776"/>
        <dbReference type="EC" id="1.2.1.59"/>
    </reaction>
</comment>
<comment type="pathway">
    <text evidence="6">Carbohydrate degradation; glycolysis; pyruvate from D-glyceraldehyde 3-phosphate: step 1/5.</text>
</comment>
<comment type="subunit">
    <text evidence="3">Homotetramer.</text>
</comment>
<comment type="subcellular location">
    <subcellularLocation>
        <location evidence="6">Cytoplasm</location>
    </subcellularLocation>
</comment>
<comment type="similarity">
    <text evidence="6">Belongs to the glyceraldehyde-3-phosphate dehydrogenase family.</text>
</comment>
<proteinExistence type="evidence at protein level"/>
<feature type="initiator methionine" description="Removed" evidence="4">
    <location>
        <position position="1"/>
    </location>
</feature>
<feature type="chain" id="PRO_0000145709" description="Glyceraldehyde-3-phosphate dehydrogenase 2">
    <location>
        <begin position="2"/>
        <end position="337"/>
    </location>
</feature>
<feature type="active site" description="Nucleophile" evidence="1">
    <location>
        <position position="154"/>
    </location>
</feature>
<feature type="binding site" evidence="1">
    <location>
        <begin position="11"/>
        <end position="12"/>
    </location>
    <ligand>
        <name>NAD(+)</name>
        <dbReference type="ChEBI" id="CHEBI:57540"/>
    </ligand>
</feature>
<feature type="binding site" evidence="1">
    <location>
        <position position="35"/>
    </location>
    <ligand>
        <name>NAD(+)</name>
        <dbReference type="ChEBI" id="CHEBI:57540"/>
    </ligand>
</feature>
<feature type="binding site" evidence="1">
    <location>
        <position position="79"/>
    </location>
    <ligand>
        <name>NAD(+)</name>
        <dbReference type="ChEBI" id="CHEBI:57540"/>
    </ligand>
</feature>
<feature type="binding site" evidence="1">
    <location>
        <position position="121"/>
    </location>
    <ligand>
        <name>NAD(+)</name>
        <dbReference type="ChEBI" id="CHEBI:57540"/>
    </ligand>
</feature>
<feature type="binding site" evidence="1">
    <location>
        <begin position="153"/>
        <end position="155"/>
    </location>
    <ligand>
        <name>D-glyceraldehyde 3-phosphate</name>
        <dbReference type="ChEBI" id="CHEBI:59776"/>
    </ligand>
</feature>
<feature type="binding site" evidence="1">
    <location>
        <position position="184"/>
    </location>
    <ligand>
        <name>D-glyceraldehyde 3-phosphate</name>
        <dbReference type="ChEBI" id="CHEBI:59776"/>
    </ligand>
</feature>
<feature type="binding site" evidence="1">
    <location>
        <position position="199"/>
    </location>
    <ligand>
        <name>D-glyceraldehyde 3-phosphate</name>
        <dbReference type="ChEBI" id="CHEBI:59776"/>
    </ligand>
</feature>
<feature type="binding site" evidence="1">
    <location>
        <begin position="212"/>
        <end position="213"/>
    </location>
    <ligand>
        <name>D-glyceraldehyde 3-phosphate</name>
        <dbReference type="ChEBI" id="CHEBI:59776"/>
    </ligand>
</feature>
<feature type="binding site" evidence="1">
    <location>
        <position position="235"/>
    </location>
    <ligand>
        <name>D-glyceraldehyde 3-phosphate</name>
        <dbReference type="ChEBI" id="CHEBI:59776"/>
    </ligand>
</feature>
<feature type="binding site" evidence="1">
    <location>
        <position position="317"/>
    </location>
    <ligand>
        <name>NAD(+)</name>
        <dbReference type="ChEBI" id="CHEBI:57540"/>
    </ligand>
</feature>
<feature type="site" description="Activates thiol group during catalysis" evidence="2">
    <location>
        <position position="181"/>
    </location>
</feature>
<feature type="sequence conflict" description="In Ref. 1; CAA58550." evidence="6" ref="1">
    <original>A</original>
    <variation>G</variation>
    <location>
        <position position="57"/>
    </location>
</feature>
<feature type="sequence conflict" description="In Ref. 2; CAA60135/BAA18633." evidence="6" ref="2">
    <original>FG</original>
    <variation>IA</variation>
    <location>
        <begin position="162"/>
        <end position="163"/>
    </location>
</feature>
<evidence type="ECO:0000250" key="1">
    <source>
        <dbReference type="UniProtKB" id="P00362"/>
    </source>
</evidence>
<evidence type="ECO:0000250" key="2">
    <source>
        <dbReference type="UniProtKB" id="Q6GIL8"/>
    </source>
</evidence>
<evidence type="ECO:0000269" key="3">
    <source>
    </source>
</evidence>
<evidence type="ECO:0000269" key="4">
    <source ref="4"/>
</evidence>
<evidence type="ECO:0000303" key="5">
    <source>
    </source>
</evidence>
<evidence type="ECO:0000305" key="6"/>
<protein>
    <recommendedName>
        <fullName evidence="5">Glyceraldehyde-3-phosphate dehydrogenase 2</fullName>
        <ecNumber evidence="3">1.2.1.59</ecNumber>
    </recommendedName>
    <alternativeName>
        <fullName evidence="5">GAPDH 2</fullName>
    </alternativeName>
    <alternativeName>
        <fullName evidence="5">NAD(P)-dependent glyceraldehyde-3-phosphate dehydrogenase</fullName>
    </alternativeName>
    <alternativeName>
        <fullName evidence="5">NAD-dependent glyceraldehyde-3-phosphate dehydrogenase</fullName>
    </alternativeName>
</protein>
<organism>
    <name type="scientific">Synechocystis sp. (strain ATCC 27184 / PCC 6803 / Kazusa)</name>
    <dbReference type="NCBI Taxonomy" id="1111708"/>
    <lineage>
        <taxon>Bacteria</taxon>
        <taxon>Bacillati</taxon>
        <taxon>Cyanobacteriota</taxon>
        <taxon>Cyanophyceae</taxon>
        <taxon>Synechococcales</taxon>
        <taxon>Merismopediaceae</taxon>
        <taxon>Synechocystis</taxon>
    </lineage>
</organism>
<sequence length="337" mass="36512">MTRVAINGFGRIGRNFLRCWLGRTDSQLEVVGINDTSDPRTNAHLLRYDSMLGKLDADISADENSITVNGKTIKCVSDRNPLNLPWAEWNVDLVIEATGVFVTHEGATKHVQAGAKKVLITAPGKGPNIGTYVVGVNAHEYKHEEYEVISNASCTTNCLAPFGKVINDNFGIIKGTMTTTHSYTGDQRILDASHRDLRRARAAAVNIVPTSTGAAKAVALVIPELQGKLNGIALRVPTPNVSVVDLVVQVEKNTIAEQVNGVLKEAANTSLKGVLEYTDLELVSSDFRGTDCSSTVDGSLTMVMGGDMVKVIAWYDNEWGYSQRVVDLAEIVAKNWK</sequence>
<dbReference type="EC" id="1.2.1.59" evidence="3"/>
<dbReference type="EMBL" id="X83564">
    <property type="protein sequence ID" value="CAA58550.1"/>
    <property type="molecule type" value="Genomic_DNA"/>
</dbReference>
<dbReference type="EMBL" id="X86376">
    <property type="protein sequence ID" value="CAA60135.1"/>
    <property type="molecule type" value="Genomic_DNA"/>
</dbReference>
<dbReference type="EMBL" id="BA000022">
    <property type="protein sequence ID" value="BAA18633.1"/>
    <property type="molecule type" value="Genomic_DNA"/>
</dbReference>
<dbReference type="PIR" id="S54141">
    <property type="entry name" value="S54141"/>
</dbReference>
<dbReference type="SMR" id="P80505"/>
<dbReference type="FunCoup" id="P80505">
    <property type="interactions" value="449"/>
</dbReference>
<dbReference type="IntAct" id="P80505">
    <property type="interactions" value="3"/>
</dbReference>
<dbReference type="STRING" id="1148.gene:10500398"/>
<dbReference type="PaxDb" id="1148-1653722"/>
<dbReference type="EnsemblBacteria" id="BAA18633">
    <property type="protein sequence ID" value="BAA18633"/>
    <property type="gene ID" value="BAA18633"/>
</dbReference>
<dbReference type="KEGG" id="syn:sll1342"/>
<dbReference type="eggNOG" id="COG0057">
    <property type="taxonomic scope" value="Bacteria"/>
</dbReference>
<dbReference type="InParanoid" id="P80505"/>
<dbReference type="PhylomeDB" id="P80505"/>
<dbReference type="SABIO-RK" id="P80505"/>
<dbReference type="UniPathway" id="UPA00109">
    <property type="reaction ID" value="UER00184"/>
</dbReference>
<dbReference type="Proteomes" id="UP000001425">
    <property type="component" value="Chromosome"/>
</dbReference>
<dbReference type="GO" id="GO:0005737">
    <property type="term" value="C:cytoplasm"/>
    <property type="evidence" value="ECO:0007669"/>
    <property type="project" value="UniProtKB-SubCell"/>
</dbReference>
<dbReference type="GO" id="GO:0004365">
    <property type="term" value="F:glyceraldehyde-3-phosphate dehydrogenase (NAD+) (phosphorylating) activity"/>
    <property type="evidence" value="ECO:0000250"/>
    <property type="project" value="UniProtKB"/>
</dbReference>
<dbReference type="GO" id="GO:0047100">
    <property type="term" value="F:glyceraldehyde-3-phosphate dehydrogenase (NADP+) (phosphorylating) activity"/>
    <property type="evidence" value="ECO:0007669"/>
    <property type="project" value="RHEA"/>
</dbReference>
<dbReference type="GO" id="GO:0051287">
    <property type="term" value="F:NAD binding"/>
    <property type="evidence" value="ECO:0000250"/>
    <property type="project" value="UniProtKB"/>
</dbReference>
<dbReference type="GO" id="GO:0050661">
    <property type="term" value="F:NADP binding"/>
    <property type="evidence" value="ECO:0007669"/>
    <property type="project" value="InterPro"/>
</dbReference>
<dbReference type="GO" id="GO:0006006">
    <property type="term" value="P:glucose metabolic process"/>
    <property type="evidence" value="ECO:0000318"/>
    <property type="project" value="GO_Central"/>
</dbReference>
<dbReference type="GO" id="GO:0006096">
    <property type="term" value="P:glycolytic process"/>
    <property type="evidence" value="ECO:0007669"/>
    <property type="project" value="UniProtKB-UniPathway"/>
</dbReference>
<dbReference type="CDD" id="cd18126">
    <property type="entry name" value="GAPDH_I_C"/>
    <property type="match status" value="1"/>
</dbReference>
<dbReference type="CDD" id="cd05214">
    <property type="entry name" value="GAPDH_I_N"/>
    <property type="match status" value="1"/>
</dbReference>
<dbReference type="FunFam" id="3.30.360.10:FF:000002">
    <property type="entry name" value="Glyceraldehyde-3-phosphate dehydrogenase"/>
    <property type="match status" value="1"/>
</dbReference>
<dbReference type="FunFam" id="3.40.50.720:FF:000001">
    <property type="entry name" value="Glyceraldehyde-3-phosphate dehydrogenase"/>
    <property type="match status" value="1"/>
</dbReference>
<dbReference type="Gene3D" id="3.30.360.10">
    <property type="entry name" value="Dihydrodipicolinate Reductase, domain 2"/>
    <property type="match status" value="1"/>
</dbReference>
<dbReference type="Gene3D" id="3.40.50.720">
    <property type="entry name" value="NAD(P)-binding Rossmann-like Domain"/>
    <property type="match status" value="1"/>
</dbReference>
<dbReference type="InterPro" id="IPR020831">
    <property type="entry name" value="GlycerAld/Erythrose_P_DH"/>
</dbReference>
<dbReference type="InterPro" id="IPR020830">
    <property type="entry name" value="GlycerAld_3-P_DH_AS"/>
</dbReference>
<dbReference type="InterPro" id="IPR020829">
    <property type="entry name" value="GlycerAld_3-P_DH_cat"/>
</dbReference>
<dbReference type="InterPro" id="IPR020828">
    <property type="entry name" value="GlycerAld_3-P_DH_NAD(P)-bd"/>
</dbReference>
<dbReference type="InterPro" id="IPR006424">
    <property type="entry name" value="Glyceraldehyde-3-P_DH_1"/>
</dbReference>
<dbReference type="InterPro" id="IPR036291">
    <property type="entry name" value="NAD(P)-bd_dom_sf"/>
</dbReference>
<dbReference type="NCBIfam" id="TIGR01534">
    <property type="entry name" value="GAPDH-I"/>
    <property type="match status" value="1"/>
</dbReference>
<dbReference type="NCBIfam" id="NF005641">
    <property type="entry name" value="PRK07403.1"/>
    <property type="match status" value="1"/>
</dbReference>
<dbReference type="PANTHER" id="PTHR43148">
    <property type="entry name" value="GLYCERALDEHYDE-3-PHOSPHATE DEHYDROGENASE 2"/>
    <property type="match status" value="1"/>
</dbReference>
<dbReference type="Pfam" id="PF02800">
    <property type="entry name" value="Gp_dh_C"/>
    <property type="match status" value="1"/>
</dbReference>
<dbReference type="Pfam" id="PF00044">
    <property type="entry name" value="Gp_dh_N"/>
    <property type="match status" value="1"/>
</dbReference>
<dbReference type="PIRSF" id="PIRSF000149">
    <property type="entry name" value="GAP_DH"/>
    <property type="match status" value="1"/>
</dbReference>
<dbReference type="PRINTS" id="PR00078">
    <property type="entry name" value="G3PDHDRGNASE"/>
</dbReference>
<dbReference type="SMART" id="SM00846">
    <property type="entry name" value="Gp_dh_N"/>
    <property type="match status" value="1"/>
</dbReference>
<dbReference type="SUPFAM" id="SSF55347">
    <property type="entry name" value="Glyceraldehyde-3-phosphate dehydrogenase-like, C-terminal domain"/>
    <property type="match status" value="1"/>
</dbReference>
<dbReference type="SUPFAM" id="SSF51735">
    <property type="entry name" value="NAD(P)-binding Rossmann-fold domains"/>
    <property type="match status" value="1"/>
</dbReference>
<dbReference type="PROSITE" id="PS00071">
    <property type="entry name" value="GAPDH"/>
    <property type="match status" value="1"/>
</dbReference>
<gene>
    <name type="primary">gap2</name>
    <name type="ordered locus">sll1342</name>
</gene>
<reference key="1">
    <citation type="journal article" date="1997" name="J. Bacteriol.">
        <title>Functional complementation of an Escherichia coli gap mutant supports an amphibolic role for NAD(P)-dependent glyceraldehyde-3-phosphate dehydrogenase of Synechocystis sp. strain PCC 6803.</title>
        <authorList>
            <person name="Valverde F."/>
            <person name="Losada M."/>
            <person name="Serrano A."/>
        </authorList>
    </citation>
    <scope>NUCLEOTIDE SEQUENCE [GENOMIC DNA]</scope>
    <scope>FUNCTION</scope>
    <scope>CATALYTIC ACTIVITY</scope>
    <scope>SUBUNIT</scope>
    <scope>SUBSTRATE SPECIFICITY</scope>
    <source>
        <strain>strain PCC 6803 / Kazusa</strain>
    </source>
</reference>
<reference key="2">
    <citation type="submission" date="1995-04" db="EMBL/GenBank/DDBJ databases">
        <authorList>
            <person name="Schubert M."/>
            <person name="Brinkmann H."/>
            <person name="Cerff R."/>
        </authorList>
    </citation>
    <scope>NUCLEOTIDE SEQUENCE [GENOMIC DNA]</scope>
</reference>
<reference key="3">
    <citation type="journal article" date="1996" name="DNA Res.">
        <title>Sequence analysis of the genome of the unicellular cyanobacterium Synechocystis sp. strain PCC6803. II. Sequence determination of the entire genome and assignment of potential protein-coding regions.</title>
        <authorList>
            <person name="Kaneko T."/>
            <person name="Sato S."/>
            <person name="Kotani H."/>
            <person name="Tanaka A."/>
            <person name="Asamizu E."/>
            <person name="Nakamura Y."/>
            <person name="Miyajima N."/>
            <person name="Hirosawa M."/>
            <person name="Sugiura M."/>
            <person name="Sasamoto S."/>
            <person name="Kimura T."/>
            <person name="Hosouchi T."/>
            <person name="Matsuno A."/>
            <person name="Muraki A."/>
            <person name="Nakazaki N."/>
            <person name="Naruo K."/>
            <person name="Okumura S."/>
            <person name="Shimpo S."/>
            <person name="Takeuchi C."/>
            <person name="Wada T."/>
            <person name="Watanabe A."/>
            <person name="Yamada M."/>
            <person name="Yasuda M."/>
            <person name="Tabata S."/>
        </authorList>
    </citation>
    <scope>NUCLEOTIDE SEQUENCE [LARGE SCALE GENOMIC DNA]</scope>
    <source>
        <strain>ATCC 27184 / PCC 6803 / Kazusa</strain>
    </source>
</reference>
<reference key="4">
    <citation type="submission" date="1995-11" db="UniProtKB">
        <authorList>
            <person name="Valverde F."/>
            <person name="Serrano A."/>
        </authorList>
    </citation>
    <scope>PROTEIN SEQUENCE OF 2-11</scope>
</reference>